<accession>A0PQ00</accession>
<gene>
    <name evidence="1" type="primary">ppk</name>
    <name type="ordered locus">MUL_1972</name>
</gene>
<comment type="function">
    <text evidence="1">Catalyzes the reversible transfer of the terminal phosphate of ATP to form a long-chain polyphosphate (polyP).</text>
</comment>
<comment type="catalytic activity">
    <reaction evidence="1">
        <text>[phosphate](n) + ATP = [phosphate](n+1) + ADP</text>
        <dbReference type="Rhea" id="RHEA:19573"/>
        <dbReference type="Rhea" id="RHEA-COMP:9859"/>
        <dbReference type="Rhea" id="RHEA-COMP:14280"/>
        <dbReference type="ChEBI" id="CHEBI:16838"/>
        <dbReference type="ChEBI" id="CHEBI:30616"/>
        <dbReference type="ChEBI" id="CHEBI:456216"/>
        <dbReference type="EC" id="2.7.4.1"/>
    </reaction>
</comment>
<comment type="cofactor">
    <cofactor evidence="1">
        <name>Mg(2+)</name>
        <dbReference type="ChEBI" id="CHEBI:18420"/>
    </cofactor>
</comment>
<comment type="PTM">
    <text evidence="1">An intermediate of this reaction is the autophosphorylated ppk in which a phosphate is covalently linked to a histidine residue through a N-P bond.</text>
</comment>
<comment type="similarity">
    <text evidence="1">Belongs to the polyphosphate kinase 1 (PPK1) family.</text>
</comment>
<reference key="1">
    <citation type="journal article" date="2007" name="Genome Res.">
        <title>Reductive evolution and niche adaptation inferred from the genome of Mycobacterium ulcerans, the causative agent of Buruli ulcer.</title>
        <authorList>
            <person name="Stinear T.P."/>
            <person name="Seemann T."/>
            <person name="Pidot S."/>
            <person name="Frigui W."/>
            <person name="Reysset G."/>
            <person name="Garnier T."/>
            <person name="Meurice G."/>
            <person name="Simon D."/>
            <person name="Bouchier C."/>
            <person name="Ma L."/>
            <person name="Tichit M."/>
            <person name="Porter J.L."/>
            <person name="Ryan J."/>
            <person name="Johnson P.D.R."/>
            <person name="Davies J.K."/>
            <person name="Jenkin G.A."/>
            <person name="Small P.L.C."/>
            <person name="Jones L.M."/>
            <person name="Tekaia F."/>
            <person name="Laval F."/>
            <person name="Daffe M."/>
            <person name="Parkhill J."/>
            <person name="Cole S.T."/>
        </authorList>
    </citation>
    <scope>NUCLEOTIDE SEQUENCE [LARGE SCALE GENOMIC DNA]</scope>
    <source>
        <strain>Agy99</strain>
    </source>
</reference>
<protein>
    <recommendedName>
        <fullName evidence="1">Polyphosphate kinase</fullName>
        <ecNumber evidence="1">2.7.4.1</ecNumber>
    </recommendedName>
    <alternativeName>
        <fullName evidence="1">ATP-polyphosphate phosphotransferase</fullName>
    </alternativeName>
    <alternativeName>
        <fullName evidence="1">Polyphosphoric acid kinase</fullName>
    </alternativeName>
</protein>
<proteinExistence type="inferred from homology"/>
<organism>
    <name type="scientific">Mycobacterium ulcerans (strain Agy99)</name>
    <dbReference type="NCBI Taxonomy" id="362242"/>
    <lineage>
        <taxon>Bacteria</taxon>
        <taxon>Bacillati</taxon>
        <taxon>Actinomycetota</taxon>
        <taxon>Actinomycetes</taxon>
        <taxon>Mycobacteriales</taxon>
        <taxon>Mycobacteriaceae</taxon>
        <taxon>Mycobacterium</taxon>
        <taxon>Mycobacterium ulcerans group</taxon>
    </lineage>
</organism>
<dbReference type="EC" id="2.7.4.1" evidence="1"/>
<dbReference type="EMBL" id="CP000325">
    <property type="protein sequence ID" value="ABL04419.1"/>
    <property type="molecule type" value="Genomic_DNA"/>
</dbReference>
<dbReference type="RefSeq" id="WP_011740038.1">
    <property type="nucleotide sequence ID" value="NC_008611.1"/>
</dbReference>
<dbReference type="SMR" id="A0PQ00"/>
<dbReference type="KEGG" id="mul:MUL_1972"/>
<dbReference type="eggNOG" id="COG0855">
    <property type="taxonomic scope" value="Bacteria"/>
</dbReference>
<dbReference type="HOGENOM" id="CLU_009678_4_2_11"/>
<dbReference type="Proteomes" id="UP000000765">
    <property type="component" value="Chromosome"/>
</dbReference>
<dbReference type="GO" id="GO:0009358">
    <property type="term" value="C:polyphosphate kinase complex"/>
    <property type="evidence" value="ECO:0007669"/>
    <property type="project" value="InterPro"/>
</dbReference>
<dbReference type="GO" id="GO:0005524">
    <property type="term" value="F:ATP binding"/>
    <property type="evidence" value="ECO:0007669"/>
    <property type="project" value="UniProtKB-KW"/>
</dbReference>
<dbReference type="GO" id="GO:0046872">
    <property type="term" value="F:metal ion binding"/>
    <property type="evidence" value="ECO:0007669"/>
    <property type="project" value="UniProtKB-KW"/>
</dbReference>
<dbReference type="GO" id="GO:0008976">
    <property type="term" value="F:polyphosphate kinase activity"/>
    <property type="evidence" value="ECO:0007669"/>
    <property type="project" value="UniProtKB-UniRule"/>
</dbReference>
<dbReference type="GO" id="GO:0006799">
    <property type="term" value="P:polyphosphate biosynthetic process"/>
    <property type="evidence" value="ECO:0007669"/>
    <property type="project" value="UniProtKB-UniRule"/>
</dbReference>
<dbReference type="CDD" id="cd09165">
    <property type="entry name" value="PLDc_PaPPK1_C1_like"/>
    <property type="match status" value="1"/>
</dbReference>
<dbReference type="FunFam" id="3.30.1840.10:FF:000002">
    <property type="entry name" value="Polyphosphate kinase"/>
    <property type="match status" value="1"/>
</dbReference>
<dbReference type="FunFam" id="3.30.870.10:FF:000001">
    <property type="entry name" value="Polyphosphate kinase"/>
    <property type="match status" value="1"/>
</dbReference>
<dbReference type="Gene3D" id="3.30.870.10">
    <property type="entry name" value="Endonuclease Chain A"/>
    <property type="match status" value="2"/>
</dbReference>
<dbReference type="Gene3D" id="3.30.1840.10">
    <property type="entry name" value="Polyphosphate kinase middle domain"/>
    <property type="match status" value="1"/>
</dbReference>
<dbReference type="Gene3D" id="1.20.58.310">
    <property type="entry name" value="Polyphosphate kinase N-terminal domain"/>
    <property type="match status" value="1"/>
</dbReference>
<dbReference type="HAMAP" id="MF_00347">
    <property type="entry name" value="Polyphosphate_kinase"/>
    <property type="match status" value="1"/>
</dbReference>
<dbReference type="InterPro" id="IPR003414">
    <property type="entry name" value="PP_kinase"/>
</dbReference>
<dbReference type="InterPro" id="IPR041108">
    <property type="entry name" value="PP_kinase_C_1"/>
</dbReference>
<dbReference type="InterPro" id="IPR024953">
    <property type="entry name" value="PP_kinase_middle"/>
</dbReference>
<dbReference type="InterPro" id="IPR036830">
    <property type="entry name" value="PP_kinase_middle_dom_sf"/>
</dbReference>
<dbReference type="InterPro" id="IPR025200">
    <property type="entry name" value="PPK_C_dom2"/>
</dbReference>
<dbReference type="InterPro" id="IPR025198">
    <property type="entry name" value="PPK_N_dom"/>
</dbReference>
<dbReference type="InterPro" id="IPR036832">
    <property type="entry name" value="PPK_N_dom_sf"/>
</dbReference>
<dbReference type="NCBIfam" id="TIGR03705">
    <property type="entry name" value="poly_P_kin"/>
    <property type="match status" value="1"/>
</dbReference>
<dbReference type="NCBIfam" id="NF003917">
    <property type="entry name" value="PRK05443.1-1"/>
    <property type="match status" value="1"/>
</dbReference>
<dbReference type="NCBIfam" id="NF003918">
    <property type="entry name" value="PRK05443.1-2"/>
    <property type="match status" value="1"/>
</dbReference>
<dbReference type="NCBIfam" id="NF003921">
    <property type="entry name" value="PRK05443.2-2"/>
    <property type="match status" value="1"/>
</dbReference>
<dbReference type="NCBIfam" id="NF003922">
    <property type="entry name" value="PRK05443.2-3"/>
    <property type="match status" value="1"/>
</dbReference>
<dbReference type="PANTHER" id="PTHR30218">
    <property type="entry name" value="POLYPHOSPHATE KINASE"/>
    <property type="match status" value="1"/>
</dbReference>
<dbReference type="PANTHER" id="PTHR30218:SF0">
    <property type="entry name" value="POLYPHOSPHATE KINASE"/>
    <property type="match status" value="1"/>
</dbReference>
<dbReference type="Pfam" id="PF02503">
    <property type="entry name" value="PP_kinase"/>
    <property type="match status" value="1"/>
</dbReference>
<dbReference type="Pfam" id="PF13090">
    <property type="entry name" value="PP_kinase_C"/>
    <property type="match status" value="1"/>
</dbReference>
<dbReference type="Pfam" id="PF17941">
    <property type="entry name" value="PP_kinase_C_1"/>
    <property type="match status" value="1"/>
</dbReference>
<dbReference type="Pfam" id="PF13089">
    <property type="entry name" value="PP_kinase_N"/>
    <property type="match status" value="1"/>
</dbReference>
<dbReference type="PIRSF" id="PIRSF015589">
    <property type="entry name" value="PP_kinase"/>
    <property type="match status" value="1"/>
</dbReference>
<dbReference type="SUPFAM" id="SSF56024">
    <property type="entry name" value="Phospholipase D/nuclease"/>
    <property type="match status" value="2"/>
</dbReference>
<dbReference type="SUPFAM" id="SSF143724">
    <property type="entry name" value="PHP14-like"/>
    <property type="match status" value="1"/>
</dbReference>
<dbReference type="SUPFAM" id="SSF140356">
    <property type="entry name" value="PPK N-terminal domain-like"/>
    <property type="match status" value="1"/>
</dbReference>
<evidence type="ECO:0000255" key="1">
    <source>
        <dbReference type="HAMAP-Rule" id="MF_00347"/>
    </source>
</evidence>
<evidence type="ECO:0000256" key="2">
    <source>
        <dbReference type="SAM" id="MobiDB-lite"/>
    </source>
</evidence>
<keyword id="KW-0067">ATP-binding</keyword>
<keyword id="KW-0418">Kinase</keyword>
<keyword id="KW-0460">Magnesium</keyword>
<keyword id="KW-0479">Metal-binding</keyword>
<keyword id="KW-0547">Nucleotide-binding</keyword>
<keyword id="KW-0597">Phosphoprotein</keyword>
<keyword id="KW-0808">Transferase</keyword>
<sequence>MIGNDRWVTEIETGPVTEARPDTNAREPGDRTPAAPPAATPAATTDQLPEDRYLNRELSWLEFNARVLALAADDSMPLLERAKFLAVFASNLDEFYMVRVAGLKRRDQMGLSALSADGLTPREQLGRIGEQTQHIASRHARVFRDSVLPALGEEGIYVVTWADLDQAEREQLSTYFHEQVFPVLTPLAVDPAHPFPFVSGLSLNLAVTVRQPEDGGQHFARVKVPDNVDRFVELGGTDTDGAEGAAVHRFLPLEELIAAFLPVLFPGMEIVEHHAFRITRNADFEVEEDRDEDLLQALERELARRRFGSPVRLEVADDMTEGMLELLLRELDVHPGDVIEVPGLLDLSSLWQIYGLDRPALKDRTFVPATHPAFAERETPKSIFATLREGDVLVHHPYYSFSTSVQRFIEQAAADPNVLAIKQTLYRTSGDSPIVRALIDAAEAGKQVVALVEVKARFDEQANIRWARALEQAGVHVAYGIVGLKTHCKTALVVRREGPVIRRYCHIGTGNYNSKTARLYEDVGLLTAAPDIGADLTDLFNSLTGYSRKLSYRNLLVAPHGIRAGIIERVEREVAAHLEHGPQAGKGHIRLKMNALVDEQVTDALYRASQVGVRIEVVVRGICALRPGAEGFSENITARSILGRFLEHSRILHFRAIDEFWIGSADMMHRNLDRRVEVMAQVKDPRLTAQLDDLFESALDPATRCWELGPDGQWTASPQEGRTVRDHQVSLMERHRSP</sequence>
<feature type="chain" id="PRO_1000079368" description="Polyphosphate kinase">
    <location>
        <begin position="1"/>
        <end position="738"/>
    </location>
</feature>
<feature type="region of interest" description="Disordered" evidence="2">
    <location>
        <begin position="1"/>
        <end position="48"/>
    </location>
</feature>
<feature type="compositionally biased region" description="Basic and acidic residues" evidence="2">
    <location>
        <begin position="19"/>
        <end position="30"/>
    </location>
</feature>
<feature type="active site" description="Phosphohistidine intermediate" evidence="1">
    <location>
        <position position="487"/>
    </location>
</feature>
<feature type="binding site" evidence="1">
    <location>
        <position position="91"/>
    </location>
    <ligand>
        <name>ATP</name>
        <dbReference type="ChEBI" id="CHEBI:30616"/>
    </ligand>
</feature>
<feature type="binding site" evidence="1">
    <location>
        <position position="427"/>
    </location>
    <ligand>
        <name>Mg(2+)</name>
        <dbReference type="ChEBI" id="CHEBI:18420"/>
    </ligand>
</feature>
<feature type="binding site" evidence="1">
    <location>
        <position position="457"/>
    </location>
    <ligand>
        <name>Mg(2+)</name>
        <dbReference type="ChEBI" id="CHEBI:18420"/>
    </ligand>
</feature>
<feature type="binding site" evidence="1">
    <location>
        <position position="520"/>
    </location>
    <ligand>
        <name>ATP</name>
        <dbReference type="ChEBI" id="CHEBI:30616"/>
    </ligand>
</feature>
<feature type="binding site" evidence="1">
    <location>
        <position position="620"/>
    </location>
    <ligand>
        <name>ATP</name>
        <dbReference type="ChEBI" id="CHEBI:30616"/>
    </ligand>
</feature>
<feature type="binding site" evidence="1">
    <location>
        <position position="648"/>
    </location>
    <ligand>
        <name>ATP</name>
        <dbReference type="ChEBI" id="CHEBI:30616"/>
    </ligand>
</feature>
<name>PPK1_MYCUA</name>